<sequence length="239" mass="26190">MKVTLFVTCLVDMFETNVGKATVEVLERLGCEIEFPEAQVCCGQPAYNSGHVEAAKEAMKHMIETFEDAEYIVTPSGSCATMFHEYPHVFKDDPKWAKRAQKVADKTYEFTQFIVDVLKVTDVGASLPGIATIHKSCHMTRMLGVTEAPGILLSNVKGLTVRELPNVQNCCGFGGTFSVKMTPISEQMVDEKVDSAMETGADYLIGADCGCLLNIGGRIERLGKEIKVMHIAEVLNSRS</sequence>
<proteinExistence type="inferred from homology"/>
<dbReference type="EMBL" id="CP001407">
    <property type="protein sequence ID" value="ACO29465.1"/>
    <property type="molecule type" value="Genomic_DNA"/>
</dbReference>
<dbReference type="RefSeq" id="WP_000869149.1">
    <property type="nucleotide sequence ID" value="NZ_CP009318.1"/>
</dbReference>
<dbReference type="SMR" id="C1EM10"/>
<dbReference type="KEGG" id="bcx:BCA_1354"/>
<dbReference type="PATRIC" id="fig|572264.18.peg.1307"/>
<dbReference type="Proteomes" id="UP000002210">
    <property type="component" value="Chromosome"/>
</dbReference>
<dbReference type="GO" id="GO:0005829">
    <property type="term" value="C:cytosol"/>
    <property type="evidence" value="ECO:0007669"/>
    <property type="project" value="TreeGrafter"/>
</dbReference>
<dbReference type="GO" id="GO:0016491">
    <property type="term" value="F:oxidoreductase activity"/>
    <property type="evidence" value="ECO:0007669"/>
    <property type="project" value="UniProtKB-ARBA"/>
</dbReference>
<dbReference type="GO" id="GO:0006089">
    <property type="term" value="P:lactate metabolic process"/>
    <property type="evidence" value="ECO:0007669"/>
    <property type="project" value="UniProtKB-UniRule"/>
</dbReference>
<dbReference type="HAMAP" id="MF_02105">
    <property type="entry name" value="LutA"/>
    <property type="match status" value="1"/>
</dbReference>
<dbReference type="InterPro" id="IPR004017">
    <property type="entry name" value="Cys_rich_dom"/>
</dbReference>
<dbReference type="InterPro" id="IPR022822">
    <property type="entry name" value="LutA"/>
</dbReference>
<dbReference type="PANTHER" id="PTHR30296:SF0">
    <property type="entry name" value="LACTATE UTILIZATION PROTEIN A"/>
    <property type="match status" value="1"/>
</dbReference>
<dbReference type="PANTHER" id="PTHR30296">
    <property type="entry name" value="UNCHARACTERIZED PROTEIN YKGE"/>
    <property type="match status" value="1"/>
</dbReference>
<dbReference type="Pfam" id="PF02754">
    <property type="entry name" value="CCG"/>
    <property type="match status" value="2"/>
</dbReference>
<name>LUTA1_BACC3</name>
<protein>
    <recommendedName>
        <fullName evidence="1">Lactate utilization protein A 1</fullName>
    </recommendedName>
</protein>
<feature type="chain" id="PRO_0000384030" description="Lactate utilization protein A 1">
    <location>
        <begin position="1"/>
        <end position="239"/>
    </location>
</feature>
<reference key="1">
    <citation type="submission" date="2009-02" db="EMBL/GenBank/DDBJ databases">
        <title>Genome sequence of Bacillus cereus 03BB102.</title>
        <authorList>
            <person name="Dodson R.J."/>
            <person name="Jackson P."/>
            <person name="Munk A.C."/>
            <person name="Brettin T."/>
            <person name="Bruce D."/>
            <person name="Detter C."/>
            <person name="Tapia R."/>
            <person name="Han C."/>
            <person name="Sutton G."/>
            <person name="Sims D."/>
        </authorList>
    </citation>
    <scope>NUCLEOTIDE SEQUENCE [LARGE SCALE GENOMIC DNA]</scope>
    <source>
        <strain>03BB102</strain>
    </source>
</reference>
<organism>
    <name type="scientific">Bacillus cereus (strain 03BB102)</name>
    <dbReference type="NCBI Taxonomy" id="572264"/>
    <lineage>
        <taxon>Bacteria</taxon>
        <taxon>Bacillati</taxon>
        <taxon>Bacillota</taxon>
        <taxon>Bacilli</taxon>
        <taxon>Bacillales</taxon>
        <taxon>Bacillaceae</taxon>
        <taxon>Bacillus</taxon>
        <taxon>Bacillus cereus group</taxon>
    </lineage>
</organism>
<comment type="function">
    <text evidence="1">Is involved in L-lactate degradation and allows cells to grow with lactate as the sole carbon source.</text>
</comment>
<comment type="similarity">
    <text evidence="1">Belongs to the LutA/YkgE family.</text>
</comment>
<gene>
    <name evidence="1" type="primary">lutA1</name>
    <name type="ordered locus">BCA_1354</name>
</gene>
<evidence type="ECO:0000255" key="1">
    <source>
        <dbReference type="HAMAP-Rule" id="MF_02105"/>
    </source>
</evidence>
<accession>C1EM10</accession>